<accession>P0A6Z2</accession>
<accession>P36541</accession>
<accession>P76990</accession>
<accession>P77497</accession>
<protein>
    <recommendedName>
        <fullName>Chaperone protein HscA</fullName>
    </recommendedName>
    <alternativeName>
        <fullName>Hsc66</fullName>
    </alternativeName>
</protein>
<name>HSCA_ECO57</name>
<evidence type="ECO:0000250" key="1"/>
<evidence type="ECO:0000305" key="2"/>
<comment type="function">
    <text evidence="1">Chaperone involved in the maturation of iron-sulfur cluster-containing proteins. Has a low intrinsic ATPase activity which is markedly stimulated by HscB. Involved in the maturation of IscU (By similarity).</text>
</comment>
<comment type="similarity">
    <text evidence="2">Belongs to the heat shock protein 70 family.</text>
</comment>
<gene>
    <name type="primary">hscA</name>
    <name type="ordered locus">Z3793</name>
    <name type="ordered locus">ECs3392</name>
</gene>
<sequence>MALLQISEPGLSAAPHQRRLAAGIDLGTTNSLVATVRSGQAETLADHEGRHLLPSVVHYQQQGHSVGYDARTNAALDTANTISSVKRLMGRSLADIQQRYPHLPYQFQASENGLPMIETAAGLLNPVRVSADILKALAARATEALAGELDGVVITVPAYFDDAQRQGTKDAARLAGLHVLRLLNEPTAAAIAYGLDSGQEGVIAVYDLGGGTFDISILRLSRGVFEVLATGGDSALGGDDFDHLLADYIREQAGIPDRSDNRVQRELLDAAIAAKIALSDADSVTVNVAGWQGEISREQFNELIAPLVKRTLLACRRALKDAGVEADEVLEVVMVGGSTRVPLVRERVGEFFGRPPLTSIDPDKVVAIGAAIQADILVGNKPDSEMLLLDVIPLSLGLETMGGLVEKVIPRNTTIPVARAQDFTTFKDGQTAMSIHVMQGERELVQDCRSLARFALRGIPALPAGGAHIRVTFQVDADGLLSVTAMEKSTGVEASIQVKPSYGLTDSEIASMIKDSMSYAEQDVKARMLAEQKVEAARVLESLHGALAADAALLSAAERQVIDDAAAHLSEVAQGDDVDAIEQAIKNVDKQTQDFAARRMDQSVRRALKGHSVDEV</sequence>
<dbReference type="EMBL" id="AE005174">
    <property type="protein sequence ID" value="AAG57640.1"/>
    <property type="molecule type" value="Genomic_DNA"/>
</dbReference>
<dbReference type="EMBL" id="BA000007">
    <property type="protein sequence ID" value="BAB36815.1"/>
    <property type="molecule type" value="Genomic_DNA"/>
</dbReference>
<dbReference type="PIR" id="H91052">
    <property type="entry name" value="H91052"/>
</dbReference>
<dbReference type="RefSeq" id="NP_311419.1">
    <property type="nucleotide sequence ID" value="NC_002695.1"/>
</dbReference>
<dbReference type="RefSeq" id="WP_001196613.1">
    <property type="nucleotide sequence ID" value="NZ_VOAI01000001.1"/>
</dbReference>
<dbReference type="SMR" id="P0A6Z2"/>
<dbReference type="MINT" id="P0A6Z2"/>
<dbReference type="STRING" id="155864.Z3793"/>
<dbReference type="GeneID" id="915196"/>
<dbReference type="GeneID" id="93774610"/>
<dbReference type="KEGG" id="ece:Z3793"/>
<dbReference type="KEGG" id="ecs:ECs_3392"/>
<dbReference type="PATRIC" id="fig|386585.9.peg.3543"/>
<dbReference type="eggNOG" id="COG0443">
    <property type="taxonomic scope" value="Bacteria"/>
</dbReference>
<dbReference type="HOGENOM" id="CLU_005965_2_1_6"/>
<dbReference type="OMA" id="GGESHMP"/>
<dbReference type="Proteomes" id="UP000000558">
    <property type="component" value="Chromosome"/>
</dbReference>
<dbReference type="Proteomes" id="UP000002519">
    <property type="component" value="Chromosome"/>
</dbReference>
<dbReference type="GO" id="GO:0005524">
    <property type="term" value="F:ATP binding"/>
    <property type="evidence" value="ECO:0007669"/>
    <property type="project" value="UniProtKB-KW"/>
</dbReference>
<dbReference type="GO" id="GO:0016887">
    <property type="term" value="F:ATP hydrolysis activity"/>
    <property type="evidence" value="ECO:0007669"/>
    <property type="project" value="UniProtKB-UniRule"/>
</dbReference>
<dbReference type="GO" id="GO:0140662">
    <property type="term" value="F:ATP-dependent protein folding chaperone"/>
    <property type="evidence" value="ECO:0007669"/>
    <property type="project" value="InterPro"/>
</dbReference>
<dbReference type="GO" id="GO:0051082">
    <property type="term" value="F:unfolded protein binding"/>
    <property type="evidence" value="ECO:0007669"/>
    <property type="project" value="InterPro"/>
</dbReference>
<dbReference type="GO" id="GO:0016226">
    <property type="term" value="P:iron-sulfur cluster assembly"/>
    <property type="evidence" value="ECO:0007669"/>
    <property type="project" value="InterPro"/>
</dbReference>
<dbReference type="CDD" id="cd10236">
    <property type="entry name" value="ASKHA_NBD_HSP70_HscA"/>
    <property type="match status" value="1"/>
</dbReference>
<dbReference type="FunFam" id="1.20.1270.10:FF:000006">
    <property type="entry name" value="Chaperone protein HscA"/>
    <property type="match status" value="1"/>
</dbReference>
<dbReference type="FunFam" id="3.30.420.40:FF:000046">
    <property type="entry name" value="Chaperone protein HscA"/>
    <property type="match status" value="1"/>
</dbReference>
<dbReference type="FunFam" id="3.90.640.10:FF:000013">
    <property type="entry name" value="Chaperone protein HscA"/>
    <property type="match status" value="1"/>
</dbReference>
<dbReference type="FunFam" id="2.60.34.10:FF:000005">
    <property type="entry name" value="Chaperone protein HscA homolog"/>
    <property type="match status" value="1"/>
</dbReference>
<dbReference type="FunFam" id="3.30.420.40:FF:000020">
    <property type="entry name" value="Chaperone protein HscA homolog"/>
    <property type="match status" value="1"/>
</dbReference>
<dbReference type="Gene3D" id="1.20.1270.10">
    <property type="match status" value="1"/>
</dbReference>
<dbReference type="Gene3D" id="3.30.420.40">
    <property type="match status" value="2"/>
</dbReference>
<dbReference type="Gene3D" id="3.90.640.10">
    <property type="entry name" value="Actin, Chain A, domain 4"/>
    <property type="match status" value="1"/>
</dbReference>
<dbReference type="Gene3D" id="2.60.34.10">
    <property type="entry name" value="Substrate Binding Domain Of DNAk, Chain A, domain 1"/>
    <property type="match status" value="1"/>
</dbReference>
<dbReference type="HAMAP" id="MF_00679">
    <property type="entry name" value="HscA"/>
    <property type="match status" value="1"/>
</dbReference>
<dbReference type="InterPro" id="IPR043129">
    <property type="entry name" value="ATPase_NBD"/>
</dbReference>
<dbReference type="InterPro" id="IPR018181">
    <property type="entry name" value="Heat_shock_70_CS"/>
</dbReference>
<dbReference type="InterPro" id="IPR042039">
    <property type="entry name" value="HscA_NBD"/>
</dbReference>
<dbReference type="InterPro" id="IPR029048">
    <property type="entry name" value="HSP70_C_sf"/>
</dbReference>
<dbReference type="InterPro" id="IPR029047">
    <property type="entry name" value="HSP70_peptide-bd_sf"/>
</dbReference>
<dbReference type="InterPro" id="IPR013126">
    <property type="entry name" value="Hsp_70_fam"/>
</dbReference>
<dbReference type="InterPro" id="IPR010236">
    <property type="entry name" value="ISC_FeS_clus_asmbl_HscA"/>
</dbReference>
<dbReference type="NCBIfam" id="TIGR01991">
    <property type="entry name" value="HscA"/>
    <property type="match status" value="1"/>
</dbReference>
<dbReference type="NCBIfam" id="NF003520">
    <property type="entry name" value="PRK05183.1"/>
    <property type="match status" value="1"/>
</dbReference>
<dbReference type="PANTHER" id="PTHR19375">
    <property type="entry name" value="HEAT SHOCK PROTEIN 70KDA"/>
    <property type="match status" value="1"/>
</dbReference>
<dbReference type="Pfam" id="PF00012">
    <property type="entry name" value="HSP70"/>
    <property type="match status" value="1"/>
</dbReference>
<dbReference type="PRINTS" id="PR00301">
    <property type="entry name" value="HEATSHOCK70"/>
</dbReference>
<dbReference type="SUPFAM" id="SSF53067">
    <property type="entry name" value="Actin-like ATPase domain"/>
    <property type="match status" value="2"/>
</dbReference>
<dbReference type="SUPFAM" id="SSF100934">
    <property type="entry name" value="Heat shock protein 70kD (HSP70), C-terminal subdomain"/>
    <property type="match status" value="1"/>
</dbReference>
<dbReference type="SUPFAM" id="SSF100920">
    <property type="entry name" value="Heat shock protein 70kD (HSP70), peptide-binding domain"/>
    <property type="match status" value="1"/>
</dbReference>
<dbReference type="PROSITE" id="PS00297">
    <property type="entry name" value="HSP70_1"/>
    <property type="match status" value="1"/>
</dbReference>
<dbReference type="PROSITE" id="PS00329">
    <property type="entry name" value="HSP70_2"/>
    <property type="match status" value="1"/>
</dbReference>
<dbReference type="PROSITE" id="PS01036">
    <property type="entry name" value="HSP70_3"/>
    <property type="match status" value="1"/>
</dbReference>
<reference key="1">
    <citation type="journal article" date="2001" name="Nature">
        <title>Genome sequence of enterohaemorrhagic Escherichia coli O157:H7.</title>
        <authorList>
            <person name="Perna N.T."/>
            <person name="Plunkett G. III"/>
            <person name="Burland V."/>
            <person name="Mau B."/>
            <person name="Glasner J.D."/>
            <person name="Rose D.J."/>
            <person name="Mayhew G.F."/>
            <person name="Evans P.S."/>
            <person name="Gregor J."/>
            <person name="Kirkpatrick H.A."/>
            <person name="Posfai G."/>
            <person name="Hackett J."/>
            <person name="Klink S."/>
            <person name="Boutin A."/>
            <person name="Shao Y."/>
            <person name="Miller L."/>
            <person name="Grotbeck E.J."/>
            <person name="Davis N.W."/>
            <person name="Lim A."/>
            <person name="Dimalanta E.T."/>
            <person name="Potamousis K."/>
            <person name="Apodaca J."/>
            <person name="Anantharaman T.S."/>
            <person name="Lin J."/>
            <person name="Yen G."/>
            <person name="Schwartz D.C."/>
            <person name="Welch R.A."/>
            <person name="Blattner F.R."/>
        </authorList>
    </citation>
    <scope>NUCLEOTIDE SEQUENCE [LARGE SCALE GENOMIC DNA]</scope>
    <source>
        <strain>O157:H7 / EDL933 / ATCC 700927 / EHEC</strain>
    </source>
</reference>
<reference key="2">
    <citation type="journal article" date="2001" name="DNA Res.">
        <title>Complete genome sequence of enterohemorrhagic Escherichia coli O157:H7 and genomic comparison with a laboratory strain K-12.</title>
        <authorList>
            <person name="Hayashi T."/>
            <person name="Makino K."/>
            <person name="Ohnishi M."/>
            <person name="Kurokawa K."/>
            <person name="Ishii K."/>
            <person name="Yokoyama K."/>
            <person name="Han C.-G."/>
            <person name="Ohtsubo E."/>
            <person name="Nakayama K."/>
            <person name="Murata T."/>
            <person name="Tanaka M."/>
            <person name="Tobe T."/>
            <person name="Iida T."/>
            <person name="Takami H."/>
            <person name="Honda T."/>
            <person name="Sasakawa C."/>
            <person name="Ogasawara N."/>
            <person name="Yasunaga T."/>
            <person name="Kuhara S."/>
            <person name="Shiba T."/>
            <person name="Hattori M."/>
            <person name="Shinagawa H."/>
        </authorList>
    </citation>
    <scope>NUCLEOTIDE SEQUENCE [LARGE SCALE GENOMIC DNA]</scope>
    <source>
        <strain>O157:H7 / Sakai / RIMD 0509952 / EHEC</strain>
    </source>
</reference>
<feature type="chain" id="PRO_0000078626" description="Chaperone protein HscA">
    <location>
        <begin position="1"/>
        <end position="616"/>
    </location>
</feature>
<proteinExistence type="inferred from homology"/>
<organism>
    <name type="scientific">Escherichia coli O157:H7</name>
    <dbReference type="NCBI Taxonomy" id="83334"/>
    <lineage>
        <taxon>Bacteria</taxon>
        <taxon>Pseudomonadati</taxon>
        <taxon>Pseudomonadota</taxon>
        <taxon>Gammaproteobacteria</taxon>
        <taxon>Enterobacterales</taxon>
        <taxon>Enterobacteriaceae</taxon>
        <taxon>Escherichia</taxon>
    </lineage>
</organism>
<keyword id="KW-0067">ATP-binding</keyword>
<keyword id="KW-0143">Chaperone</keyword>
<keyword id="KW-0547">Nucleotide-binding</keyword>
<keyword id="KW-1185">Reference proteome</keyword>